<keyword id="KW-0966">Cell projection</keyword>
<keyword id="KW-0969">Cilium</keyword>
<keyword id="KW-0970">Cilium biogenesis/degradation</keyword>
<keyword id="KW-1185">Reference proteome</keyword>
<keyword id="KW-0677">Repeat</keyword>
<keyword id="KW-0802">TPR repeat</keyword>
<name>TTC30_ANOGA</name>
<organism>
    <name type="scientific">Anopheles gambiae</name>
    <name type="common">African malaria mosquito</name>
    <dbReference type="NCBI Taxonomy" id="7165"/>
    <lineage>
        <taxon>Eukaryota</taxon>
        <taxon>Metazoa</taxon>
        <taxon>Ecdysozoa</taxon>
        <taxon>Arthropoda</taxon>
        <taxon>Hexapoda</taxon>
        <taxon>Insecta</taxon>
        <taxon>Pterygota</taxon>
        <taxon>Neoptera</taxon>
        <taxon>Endopterygota</taxon>
        <taxon>Diptera</taxon>
        <taxon>Nematocera</taxon>
        <taxon>Culicoidea</taxon>
        <taxon>Culicidae</taxon>
        <taxon>Anophelinae</taxon>
        <taxon>Anopheles</taxon>
    </lineage>
</organism>
<dbReference type="EMBL" id="AAAB01008859">
    <property type="protein sequence ID" value="EAA07585.3"/>
    <property type="molecule type" value="Genomic_DNA"/>
</dbReference>
<dbReference type="SMR" id="Q7PRA4"/>
<dbReference type="FunCoup" id="Q7PRA4">
    <property type="interactions" value="51"/>
</dbReference>
<dbReference type="STRING" id="7165.Q7PRA4"/>
<dbReference type="PaxDb" id="7165-AGAP002877-PA"/>
<dbReference type="EnsemblMetazoa" id="AGAP002877-RA">
    <property type="protein sequence ID" value="AGAP002877-PA"/>
    <property type="gene ID" value="AGAP002877"/>
</dbReference>
<dbReference type="GeneID" id="1273090"/>
<dbReference type="KEGG" id="aga:1273090"/>
<dbReference type="CTD" id="34702"/>
<dbReference type="VEuPathDB" id="VectorBase:AGAMI1_002964"/>
<dbReference type="VEuPathDB" id="VectorBase:AGAP002877"/>
<dbReference type="eggNOG" id="KOG4340">
    <property type="taxonomic scope" value="Eukaryota"/>
</dbReference>
<dbReference type="HOGENOM" id="CLU_023760_0_0_1"/>
<dbReference type="InParanoid" id="Q7PRA4"/>
<dbReference type="OMA" id="CCKHELY"/>
<dbReference type="PhylomeDB" id="Q7PRA4"/>
<dbReference type="Proteomes" id="UP000007062">
    <property type="component" value="Chromosome 2R"/>
</dbReference>
<dbReference type="GO" id="GO:0005879">
    <property type="term" value="C:axonemal microtubule"/>
    <property type="evidence" value="ECO:0000250"/>
    <property type="project" value="UniProtKB"/>
</dbReference>
<dbReference type="GO" id="GO:0005929">
    <property type="term" value="C:cilium"/>
    <property type="evidence" value="ECO:0000250"/>
    <property type="project" value="UniProtKB"/>
</dbReference>
<dbReference type="GO" id="GO:0030992">
    <property type="term" value="C:intraciliary transport particle B"/>
    <property type="evidence" value="ECO:0000318"/>
    <property type="project" value="GO_Central"/>
</dbReference>
<dbReference type="GO" id="GO:0120170">
    <property type="term" value="F:intraciliary transport particle B binding"/>
    <property type="evidence" value="ECO:0000318"/>
    <property type="project" value="GO_Central"/>
</dbReference>
<dbReference type="GO" id="GO:0042073">
    <property type="term" value="P:intraciliary transport"/>
    <property type="evidence" value="ECO:0000250"/>
    <property type="project" value="UniProtKB"/>
</dbReference>
<dbReference type="GO" id="GO:0018095">
    <property type="term" value="P:protein polyglutamylation"/>
    <property type="evidence" value="ECO:0000250"/>
    <property type="project" value="UniProtKB"/>
</dbReference>
<dbReference type="FunFam" id="1.25.40.10:FF:000693">
    <property type="entry name" value="Tetratricopeptide repeat domain 30A"/>
    <property type="match status" value="1"/>
</dbReference>
<dbReference type="FunFam" id="1.25.40.10:FF:001446">
    <property type="entry name" value="Tetratricopeptide repeat protein 30 homolog"/>
    <property type="match status" value="1"/>
</dbReference>
<dbReference type="Gene3D" id="1.25.40.10">
    <property type="entry name" value="Tetratricopeptide repeat domain"/>
    <property type="match status" value="3"/>
</dbReference>
<dbReference type="InterPro" id="IPR011990">
    <property type="entry name" value="TPR-like_helical_dom_sf"/>
</dbReference>
<dbReference type="InterPro" id="IPR019734">
    <property type="entry name" value="TPR_rpt"/>
</dbReference>
<dbReference type="InterPro" id="IPR039941">
    <property type="entry name" value="TT30"/>
</dbReference>
<dbReference type="PANTHER" id="PTHR20931">
    <property type="entry name" value="TETRATRICOPEPTIDE REPEAT PROTEIN 30"/>
    <property type="match status" value="1"/>
</dbReference>
<dbReference type="PANTHER" id="PTHR20931:SF0">
    <property type="entry name" value="TETRATRICOPEPTIDE REPEAT PROTEIN 30"/>
    <property type="match status" value="1"/>
</dbReference>
<dbReference type="Pfam" id="PF13432">
    <property type="entry name" value="TPR_16"/>
    <property type="match status" value="2"/>
</dbReference>
<dbReference type="SMART" id="SM00028">
    <property type="entry name" value="TPR"/>
    <property type="match status" value="3"/>
</dbReference>
<dbReference type="SUPFAM" id="SSF48452">
    <property type="entry name" value="TPR-like"/>
    <property type="match status" value="2"/>
</dbReference>
<dbReference type="PROSITE" id="PS50005">
    <property type="entry name" value="TPR"/>
    <property type="match status" value="3"/>
</dbReference>
<dbReference type="PROSITE" id="PS50293">
    <property type="entry name" value="TPR_REGION"/>
    <property type="match status" value="1"/>
</dbReference>
<evidence type="ECO:0000250" key="1"/>
<evidence type="ECO:0000305" key="2"/>
<proteinExistence type="inferred from homology"/>
<gene>
    <name type="ORF">AGAP002877</name>
</gene>
<sequence length="654" mass="72382">MFSQNMIIRDGEYTKTIYTMIKEERFQDAINTLNTIPESSTTRAGLSLLGHCYYQTQDFIEAANCYEHLLNLVPDVQEYRLYYAQSLFQAGLFEEAQKIIATGLDSPELKEKVLQLQSAIAYGNEDYTAAQSLLLQRQDGNGQEASTKNDEGCLLYQANMYEDALQRYVSALQAGGFNPHVAYNAALCHYRRKENSQALNYIAEIVERGIRNHPELGVGAQAETEGGARSVGNPPALAASGLAQAFNLKAAIEYQEGNADGAREALTDLPPRSEPELDPVTLHNMALTDPTGGGAGLRRLAFLLELGPPACPPETFANLLLLCCKHEMYDTAADILAEHTHLTYKYLSPYLYDLLDALITAQSTPEEAEQKLGTLASSIGGRLRALAAKVQECRSATDQNALRMALREYEGALESYLPVAMARAWIPWRMDDFQGAEREFRASAEFCSETPSWRLHAAHVLFMRGDRYKEAAAFYEPIVRQNYDDILSIPASVLANLCVAYIMTSQNEEAEELMRKVERAEERKGNATGQCLHLCIVNLVIGTLYCAKNNYEFGLSRIAHALDGGSGARLCADTWIHVKRCVLGLLTGMAKQTIVLPSIALQETLNFLRACEAYGLTIPSVLTGPLEDSGEQPPTIGLEARKLRALLLRLMEYK</sequence>
<accession>Q7PRA4</accession>
<protein>
    <recommendedName>
        <fullName>Tetratricopeptide repeat protein 30 homolog</fullName>
        <shortName>TPR repeat protein 30 homolog</shortName>
    </recommendedName>
</protein>
<feature type="chain" id="PRO_0000333212" description="Tetratricopeptide repeat protein 30 homolog">
    <location>
        <begin position="1"/>
        <end position="654"/>
    </location>
</feature>
<feature type="repeat" description="TPR 1">
    <location>
        <begin position="10"/>
        <end position="43"/>
    </location>
</feature>
<feature type="repeat" description="TPR 2">
    <location>
        <begin position="44"/>
        <end position="76"/>
    </location>
</feature>
<feature type="repeat" description="TPR 3">
    <location>
        <begin position="145"/>
        <end position="178"/>
    </location>
</feature>
<feature type="repeat" description="TPR 4">
    <location>
        <begin position="180"/>
        <end position="212"/>
    </location>
</feature>
<feature type="repeat" description="TPR 5">
    <location>
        <begin position="393"/>
        <end position="426"/>
    </location>
</feature>
<feature type="repeat" description="TPR 6">
    <location>
        <begin position="452"/>
        <end position="485"/>
    </location>
</feature>
<feature type="repeat" description="TPR 7">
    <location>
        <begin position="535"/>
        <end position="568"/>
    </location>
</feature>
<reference key="1">
    <citation type="journal article" date="2002" name="Science">
        <title>The genome sequence of the malaria mosquito Anopheles gambiae.</title>
        <authorList>
            <person name="Holt R.A."/>
            <person name="Subramanian G.M."/>
            <person name="Halpern A."/>
            <person name="Sutton G.G."/>
            <person name="Charlab R."/>
            <person name="Nusskern D.R."/>
            <person name="Wincker P."/>
            <person name="Clark A.G."/>
            <person name="Ribeiro J.M.C."/>
            <person name="Wides R."/>
            <person name="Salzberg S.L."/>
            <person name="Loftus B.J."/>
            <person name="Yandell M.D."/>
            <person name="Majoros W.H."/>
            <person name="Rusch D.B."/>
            <person name="Lai Z."/>
            <person name="Kraft C.L."/>
            <person name="Abril J.F."/>
            <person name="Anthouard V."/>
            <person name="Arensburger P."/>
            <person name="Atkinson P.W."/>
            <person name="Baden H."/>
            <person name="de Berardinis V."/>
            <person name="Baldwin D."/>
            <person name="Benes V."/>
            <person name="Biedler J."/>
            <person name="Blass C."/>
            <person name="Bolanos R."/>
            <person name="Boscus D."/>
            <person name="Barnstead M."/>
            <person name="Cai S."/>
            <person name="Center A."/>
            <person name="Chaturverdi K."/>
            <person name="Christophides G.K."/>
            <person name="Chrystal M.A.M."/>
            <person name="Clamp M."/>
            <person name="Cravchik A."/>
            <person name="Curwen V."/>
            <person name="Dana A."/>
            <person name="Delcher A."/>
            <person name="Dew I."/>
            <person name="Evans C.A."/>
            <person name="Flanigan M."/>
            <person name="Grundschober-Freimoser A."/>
            <person name="Friedli L."/>
            <person name="Gu Z."/>
            <person name="Guan P."/>
            <person name="Guigo R."/>
            <person name="Hillenmeyer M.E."/>
            <person name="Hladun S.L."/>
            <person name="Hogan J.R."/>
            <person name="Hong Y.S."/>
            <person name="Hoover J."/>
            <person name="Jaillon O."/>
            <person name="Ke Z."/>
            <person name="Kodira C.D."/>
            <person name="Kokoza E."/>
            <person name="Koutsos A."/>
            <person name="Letunic I."/>
            <person name="Levitsky A.A."/>
            <person name="Liang Y."/>
            <person name="Lin J.-J."/>
            <person name="Lobo N.F."/>
            <person name="Lopez J.R."/>
            <person name="Malek J.A."/>
            <person name="McIntosh T.C."/>
            <person name="Meister S."/>
            <person name="Miller J.R."/>
            <person name="Mobarry C."/>
            <person name="Mongin E."/>
            <person name="Murphy S.D."/>
            <person name="O'Brochta D.A."/>
            <person name="Pfannkoch C."/>
            <person name="Qi R."/>
            <person name="Regier M.A."/>
            <person name="Remington K."/>
            <person name="Shao H."/>
            <person name="Sharakhova M.V."/>
            <person name="Sitter C.D."/>
            <person name="Shetty J."/>
            <person name="Smith T.J."/>
            <person name="Strong R."/>
            <person name="Sun J."/>
            <person name="Thomasova D."/>
            <person name="Ton L.Q."/>
            <person name="Topalis P."/>
            <person name="Tu Z.J."/>
            <person name="Unger M.F."/>
            <person name="Walenz B."/>
            <person name="Wang A.H."/>
            <person name="Wang J."/>
            <person name="Wang M."/>
            <person name="Wang X."/>
            <person name="Woodford K.J."/>
            <person name="Wortman J.R."/>
            <person name="Wu M."/>
            <person name="Yao A."/>
            <person name="Zdobnov E.M."/>
            <person name="Zhang H."/>
            <person name="Zhao Q."/>
            <person name="Zhao S."/>
            <person name="Zhu S.C."/>
            <person name="Zhimulev I."/>
            <person name="Coluzzi M."/>
            <person name="della Torre A."/>
            <person name="Roth C.W."/>
            <person name="Louis C."/>
            <person name="Kalush F."/>
            <person name="Mural R.J."/>
            <person name="Myers E.W."/>
            <person name="Adams M.D."/>
            <person name="Smith H.O."/>
            <person name="Broder S."/>
            <person name="Gardner M.J."/>
            <person name="Fraser C.M."/>
            <person name="Birney E."/>
            <person name="Bork P."/>
            <person name="Brey P.T."/>
            <person name="Venter J.C."/>
            <person name="Weissenbach J."/>
            <person name="Kafatos F.C."/>
            <person name="Collins F.H."/>
            <person name="Hoffman S.L."/>
        </authorList>
    </citation>
    <scope>NUCLEOTIDE SEQUENCE [LARGE SCALE GENOMIC DNA]</scope>
    <source>
        <strain>PEST</strain>
    </source>
</reference>
<comment type="function">
    <text evidence="1">Required for polyglutamylation of axonemal tubulin in sensory cilia. Plays a role in anterograde intraflagellar transport (IFT), the process by which cilia precursors are transported from the base of the cilium to the site of their incorporation at the tip.</text>
</comment>
<comment type="subcellular location">
    <subcellularLocation>
        <location evidence="1">Cell projection</location>
        <location evidence="1">Cilium</location>
    </subcellularLocation>
</comment>
<comment type="similarity">
    <text evidence="2">Belongs to the TTC30/dfy-1/fleer family.</text>
</comment>